<gene>
    <name type="primary">shh</name>
</gene>
<name>SHH_PSEPR</name>
<organism>
    <name type="scientific">Pseudorasbora parva</name>
    <dbReference type="NCBI Taxonomy" id="51549"/>
    <lineage>
        <taxon>Eukaryota</taxon>
        <taxon>Metazoa</taxon>
        <taxon>Chordata</taxon>
        <taxon>Craniata</taxon>
        <taxon>Vertebrata</taxon>
        <taxon>Euteleostomi</taxon>
        <taxon>Actinopterygii</taxon>
        <taxon>Neopterygii</taxon>
        <taxon>Teleostei</taxon>
        <taxon>Ostariophysi</taxon>
        <taxon>Cypriniformes</taxon>
        <taxon>Gobionidae</taxon>
        <taxon>Sarcocheilichthyinae</taxon>
        <taxon>Pseudorasbora</taxon>
    </lineage>
</organism>
<reference key="1">
    <citation type="journal article" date="1996" name="Proc. Natl. Acad. Sci. U.S.A.">
        <title>Evolutionary analyses of hedgehog and Hoxd-10 genes in fish species closely related to the zebrafish.</title>
        <authorList>
            <person name="Zardoya R."/>
            <person name="Abouheif E."/>
            <person name="Meyer A."/>
        </authorList>
    </citation>
    <scope>NUCLEOTIDE SEQUENCE [GENOMIC DNA]</scope>
    <source>
        <tissue>Muscle</tissue>
    </source>
</reference>
<evidence type="ECO:0000250" key="1"/>
<evidence type="ECO:0000250" key="2">
    <source>
        <dbReference type="UniProtKB" id="Q15465"/>
    </source>
</evidence>
<evidence type="ECO:0000305" key="3"/>
<comment type="function">
    <text evidence="1">Intercellular signal essential for a variety of patterning events during development. Signal produced by the notochord that induces somite patterning, dorso-ventral patterning of the brain and early patterning of the developing eyes. Displays floor plate-inducing activity. Binds to the patched (PTC) receptor, which functions in association with smoothened (SMO), to activate the transcription of target genes. In the absence of SHH, PTC represses the constitutive signaling activity of SMO (By similarity).</text>
</comment>
<comment type="subunit">
    <text evidence="1">N-product is active as a multimer.</text>
</comment>
<comment type="subcellular location">
    <subcellularLocation>
        <location evidence="1">Secreted</location>
    </subcellularLocation>
    <subcellularLocation>
        <location evidence="1">Cell membrane</location>
    </subcellularLocation>
    <text evidence="1">Sonic hedgehog protein C-product: Secreted, extracellular space. Sonic hedgehog protein N-product: Cell membrane; Lipid-anchor. The C-terminal peptide diffuses from the cell, while the N-product either remains associated with lipid rafts at the cell surface, or forms freely diffusible active multimers with its hydrophobic lipid-modified N- and C-termini buried inside.</text>
</comment>
<comment type="domain">
    <text evidence="1">The sonic hedgehog protein N-product binds calcium and zinc ions; this stabilizes the protein fold and is essential for protein-protein interactions mediated by this domain.</text>
</comment>
<comment type="PTM">
    <text>The C-terminal domain displays an autoproteolysis activity and a cholesterol transferase activity. Both activities result in the cleavage of the full-length protein and covalent attachment of a cholesterol moiety to the C-terminal of the newly generated N-terminal fragment (N-product). The N-product is the active species in both local and long-range signaling, whereas the C-product has no signaling activity.</text>
</comment>
<comment type="PTM">
    <text evidence="1">Cholesterylation is required for N-product targeting to lipid rafts and multimerization.</text>
</comment>
<comment type="PTM">
    <text evidence="1">N-palmitoylation is required for N-product multimerization and full activity.</text>
</comment>
<comment type="similarity">
    <text evidence="3">Belongs to the hedgehog family.</text>
</comment>
<accession>P79839</accession>
<feature type="chain" id="PRO_0000058732" description="Sonic hedgehog protein">
    <location>
        <begin position="1" status="less than"/>
        <end position="58" status="greater than"/>
    </location>
</feature>
<feature type="binding site" evidence="2">
    <location>
        <position position="13"/>
    </location>
    <ligand>
        <name>Ca(2+)</name>
        <dbReference type="ChEBI" id="CHEBI:29108"/>
        <label>1</label>
    </ligand>
</feature>
<feature type="binding site" evidence="2">
    <location>
        <position position="14"/>
    </location>
    <ligand>
        <name>Ca(2+)</name>
        <dbReference type="ChEBI" id="CHEBI:29108"/>
        <label>1</label>
    </ligand>
</feature>
<feature type="binding site" evidence="2">
    <location>
        <position position="14"/>
    </location>
    <ligand>
        <name>Ca(2+)</name>
        <dbReference type="ChEBI" id="CHEBI:29108"/>
        <label>2</label>
    </ligand>
</feature>
<feature type="binding site" evidence="2">
    <location>
        <position position="17"/>
    </location>
    <ligand>
        <name>Ca(2+)</name>
        <dbReference type="ChEBI" id="CHEBI:29108"/>
        <label>2</label>
    </ligand>
</feature>
<feature type="binding site" evidence="2">
    <location>
        <position position="19"/>
    </location>
    <ligand>
        <name>Ca(2+)</name>
        <dbReference type="ChEBI" id="CHEBI:29108"/>
        <label>2</label>
    </ligand>
</feature>
<feature type="binding site" evidence="2">
    <location>
        <position position="28"/>
    </location>
    <ligand>
        <name>Zn(2+)</name>
        <dbReference type="ChEBI" id="CHEBI:29105"/>
    </ligand>
</feature>
<feature type="binding site" evidence="2">
    <location>
        <position position="35"/>
    </location>
    <ligand>
        <name>Zn(2+)</name>
        <dbReference type="ChEBI" id="CHEBI:29105"/>
    </ligand>
</feature>
<feature type="non-terminal residue">
    <location>
        <position position="1"/>
    </location>
</feature>
<feature type="non-terminal residue">
    <location>
        <position position="58"/>
    </location>
</feature>
<keyword id="KW-0068">Autocatalytic cleavage</keyword>
<keyword id="KW-0106">Calcium</keyword>
<keyword id="KW-1003">Cell membrane</keyword>
<keyword id="KW-0217">Developmental protein</keyword>
<keyword id="KW-0378">Hydrolase</keyword>
<keyword id="KW-0449">Lipoprotein</keyword>
<keyword id="KW-0472">Membrane</keyword>
<keyword id="KW-0479">Metal-binding</keyword>
<keyword id="KW-0564">Palmitate</keyword>
<keyword id="KW-0645">Protease</keyword>
<keyword id="KW-0964">Secreted</keyword>
<keyword id="KW-0862">Zinc</keyword>
<dbReference type="EMBL" id="U51358">
    <property type="protein sequence ID" value="AAB38594.1"/>
    <property type="molecule type" value="Genomic_DNA"/>
</dbReference>
<dbReference type="SMR" id="P79839"/>
<dbReference type="GO" id="GO:0005615">
    <property type="term" value="C:extracellular space"/>
    <property type="evidence" value="ECO:0007669"/>
    <property type="project" value="TreeGrafter"/>
</dbReference>
<dbReference type="GO" id="GO:0005886">
    <property type="term" value="C:plasma membrane"/>
    <property type="evidence" value="ECO:0007669"/>
    <property type="project" value="UniProtKB-SubCell"/>
</dbReference>
<dbReference type="GO" id="GO:0005509">
    <property type="term" value="F:calcium ion binding"/>
    <property type="evidence" value="ECO:0007669"/>
    <property type="project" value="TreeGrafter"/>
</dbReference>
<dbReference type="GO" id="GO:0005113">
    <property type="term" value="F:patched binding"/>
    <property type="evidence" value="ECO:0007669"/>
    <property type="project" value="TreeGrafter"/>
</dbReference>
<dbReference type="GO" id="GO:0008233">
    <property type="term" value="F:peptidase activity"/>
    <property type="evidence" value="ECO:0007669"/>
    <property type="project" value="UniProtKB-KW"/>
</dbReference>
<dbReference type="GO" id="GO:0048513">
    <property type="term" value="P:animal organ development"/>
    <property type="evidence" value="ECO:0007669"/>
    <property type="project" value="UniProtKB-ARBA"/>
</dbReference>
<dbReference type="GO" id="GO:0048468">
    <property type="term" value="P:cell development"/>
    <property type="evidence" value="ECO:0007669"/>
    <property type="project" value="UniProtKB-ARBA"/>
</dbReference>
<dbReference type="GO" id="GO:0001708">
    <property type="term" value="P:cell fate specification"/>
    <property type="evidence" value="ECO:0007669"/>
    <property type="project" value="TreeGrafter"/>
</dbReference>
<dbReference type="GO" id="GO:0007267">
    <property type="term" value="P:cell-cell signaling"/>
    <property type="evidence" value="ECO:0007669"/>
    <property type="project" value="InterPro"/>
</dbReference>
<dbReference type="GO" id="GO:0007417">
    <property type="term" value="P:central nervous system development"/>
    <property type="evidence" value="ECO:0007669"/>
    <property type="project" value="UniProtKB-ARBA"/>
</dbReference>
<dbReference type="GO" id="GO:0030182">
    <property type="term" value="P:neuron differentiation"/>
    <property type="evidence" value="ECO:0007669"/>
    <property type="project" value="UniProtKB-ARBA"/>
</dbReference>
<dbReference type="GO" id="GO:0006508">
    <property type="term" value="P:proteolysis"/>
    <property type="evidence" value="ECO:0007669"/>
    <property type="project" value="UniProtKB-KW"/>
</dbReference>
<dbReference type="GO" id="GO:0010468">
    <property type="term" value="P:regulation of gene expression"/>
    <property type="evidence" value="ECO:0007669"/>
    <property type="project" value="TreeGrafter"/>
</dbReference>
<dbReference type="GO" id="GO:0007224">
    <property type="term" value="P:smoothened signaling pathway"/>
    <property type="evidence" value="ECO:0007669"/>
    <property type="project" value="TreeGrafter"/>
</dbReference>
<dbReference type="GO" id="GO:0009888">
    <property type="term" value="P:tissue development"/>
    <property type="evidence" value="ECO:0007669"/>
    <property type="project" value="UniProtKB-ARBA"/>
</dbReference>
<dbReference type="Gene3D" id="3.30.1380.10">
    <property type="match status" value="1"/>
</dbReference>
<dbReference type="InterPro" id="IPR001657">
    <property type="entry name" value="Hedgehog"/>
</dbReference>
<dbReference type="InterPro" id="IPR009045">
    <property type="entry name" value="Hedgehog_sig/DD-Pept_Zn-bd_sf"/>
</dbReference>
<dbReference type="InterPro" id="IPR050387">
    <property type="entry name" value="Hedgehog_Signaling"/>
</dbReference>
<dbReference type="InterPro" id="IPR000320">
    <property type="entry name" value="Hedgehog_signalling_dom"/>
</dbReference>
<dbReference type="PANTHER" id="PTHR11889">
    <property type="entry name" value="HEDGEHOG"/>
    <property type="match status" value="1"/>
</dbReference>
<dbReference type="PANTHER" id="PTHR11889:SF36">
    <property type="entry name" value="SONIC HEDGEHOG PROTEIN"/>
    <property type="match status" value="1"/>
</dbReference>
<dbReference type="Pfam" id="PF01085">
    <property type="entry name" value="HH_signal"/>
    <property type="match status" value="1"/>
</dbReference>
<dbReference type="PRINTS" id="PR00632">
    <property type="entry name" value="SONICHHOG"/>
</dbReference>
<dbReference type="SUPFAM" id="SSF55166">
    <property type="entry name" value="Hedgehog/DD-peptidase"/>
    <property type="match status" value="1"/>
</dbReference>
<sequence>VMNQWPGVNLRVTEGWDEDGHHFEESLHYEGRAVDITTSDRDKSKYGTLSRLAVEAGF</sequence>
<proteinExistence type="inferred from homology"/>
<protein>
    <recommendedName>
        <fullName>Sonic hedgehog protein</fullName>
        <shortName>SHH</shortName>
    </recommendedName>
</protein>